<organism>
    <name type="scientific">Salinibacter ruber (strain DSM 13855 / M31)</name>
    <dbReference type="NCBI Taxonomy" id="309807"/>
    <lineage>
        <taxon>Bacteria</taxon>
        <taxon>Pseudomonadati</taxon>
        <taxon>Rhodothermota</taxon>
        <taxon>Rhodothermia</taxon>
        <taxon>Rhodothermales</taxon>
        <taxon>Salinibacteraceae</taxon>
        <taxon>Salinibacter</taxon>
    </lineage>
</organism>
<dbReference type="EC" id="7.1.1.-" evidence="1"/>
<dbReference type="EMBL" id="CP000159">
    <property type="protein sequence ID" value="ABC43799.1"/>
    <property type="status" value="ALT_INIT"/>
    <property type="molecule type" value="Genomic_DNA"/>
</dbReference>
<dbReference type="RefSeq" id="WP_043552781.1">
    <property type="nucleotide sequence ID" value="NC_007677.1"/>
</dbReference>
<dbReference type="RefSeq" id="YP_446876.1">
    <property type="nucleotide sequence ID" value="NC_007677.1"/>
</dbReference>
<dbReference type="SMR" id="Q2RYV5"/>
<dbReference type="STRING" id="309807.SRU_2784"/>
<dbReference type="EnsemblBacteria" id="ABC43799">
    <property type="protein sequence ID" value="ABC43799"/>
    <property type="gene ID" value="SRU_2784"/>
</dbReference>
<dbReference type="GeneID" id="83729799"/>
<dbReference type="KEGG" id="sru:SRU_2784"/>
<dbReference type="PATRIC" id="fig|309807.25.peg.2905"/>
<dbReference type="eggNOG" id="COG1005">
    <property type="taxonomic scope" value="Bacteria"/>
</dbReference>
<dbReference type="HOGENOM" id="CLU_015134_0_1_10"/>
<dbReference type="OrthoDB" id="9803734at2"/>
<dbReference type="Proteomes" id="UP000008674">
    <property type="component" value="Chromosome"/>
</dbReference>
<dbReference type="GO" id="GO:0005886">
    <property type="term" value="C:plasma membrane"/>
    <property type="evidence" value="ECO:0007669"/>
    <property type="project" value="UniProtKB-SubCell"/>
</dbReference>
<dbReference type="GO" id="GO:0003954">
    <property type="term" value="F:NADH dehydrogenase activity"/>
    <property type="evidence" value="ECO:0007669"/>
    <property type="project" value="TreeGrafter"/>
</dbReference>
<dbReference type="GO" id="GO:0016655">
    <property type="term" value="F:oxidoreductase activity, acting on NAD(P)H, quinone or similar compound as acceptor"/>
    <property type="evidence" value="ECO:0007669"/>
    <property type="project" value="UniProtKB-UniRule"/>
</dbReference>
<dbReference type="GO" id="GO:0048038">
    <property type="term" value="F:quinone binding"/>
    <property type="evidence" value="ECO:0007669"/>
    <property type="project" value="UniProtKB-KW"/>
</dbReference>
<dbReference type="GO" id="GO:0009060">
    <property type="term" value="P:aerobic respiration"/>
    <property type="evidence" value="ECO:0007669"/>
    <property type="project" value="TreeGrafter"/>
</dbReference>
<dbReference type="HAMAP" id="MF_01350">
    <property type="entry name" value="NDH1_NuoH"/>
    <property type="match status" value="1"/>
</dbReference>
<dbReference type="InterPro" id="IPR001694">
    <property type="entry name" value="NADH_UbQ_OxRdtase_su1/FPO"/>
</dbReference>
<dbReference type="InterPro" id="IPR018086">
    <property type="entry name" value="NADH_UbQ_OxRdtase_su1_CS"/>
</dbReference>
<dbReference type="NCBIfam" id="NF004741">
    <property type="entry name" value="PRK06076.1-2"/>
    <property type="match status" value="1"/>
</dbReference>
<dbReference type="PANTHER" id="PTHR11432">
    <property type="entry name" value="NADH DEHYDROGENASE SUBUNIT 1"/>
    <property type="match status" value="1"/>
</dbReference>
<dbReference type="PANTHER" id="PTHR11432:SF3">
    <property type="entry name" value="NADH-UBIQUINONE OXIDOREDUCTASE CHAIN 1"/>
    <property type="match status" value="1"/>
</dbReference>
<dbReference type="Pfam" id="PF00146">
    <property type="entry name" value="NADHdh"/>
    <property type="match status" value="1"/>
</dbReference>
<dbReference type="PROSITE" id="PS00668">
    <property type="entry name" value="COMPLEX1_ND1_2"/>
    <property type="match status" value="1"/>
</dbReference>
<sequence>MIPSMVWTALGAFLVINAMLLSASLLVFAERRVSAFIQNRPGPNRVGPLGLLQPFADVLKFVLKEDVQPAQSNKFIHSMAPVVMVVIAMTTASLIPFAEGVVVADLNVGVIMLLALTSISVYGVTLAGWSSNSKFSLLGGLRSAAQMVSYELSMGLAVISVVLIAGSLNFMEIVEHQSSGGALLGWNAVRNPIGCLIFIVTAFAETNRAPFDLPEAEEELVAGYHTEYSGMKFGMFFLAEYVNWFIASFFIVTLFFGGYLVPLEPQLIALFPALEGSTLLALLQFVSLMLKVSFFSFVFIWVRWTFPRFKYNQLMKVGWKYLLPIALANAILIALGVVLFGAVGL</sequence>
<name>NUOH_SALRD</name>
<accession>Q2RYV5</accession>
<comment type="function">
    <text evidence="1">NDH-1 shuttles electrons from NADH, via FMN and iron-sulfur (Fe-S) centers, to quinones in the respiratory chain. The immediate electron acceptor for the enzyme in this species is believed to be ubiquinone. Couples the redox reaction to proton translocation (for every two electrons transferred, four hydrogen ions are translocated across the cytoplasmic membrane), and thus conserves the redox energy in a proton gradient. This subunit may bind ubiquinone.</text>
</comment>
<comment type="catalytic activity">
    <reaction evidence="1">
        <text>a quinone + NADH + 5 H(+)(in) = a quinol + NAD(+) + 4 H(+)(out)</text>
        <dbReference type="Rhea" id="RHEA:57888"/>
        <dbReference type="ChEBI" id="CHEBI:15378"/>
        <dbReference type="ChEBI" id="CHEBI:24646"/>
        <dbReference type="ChEBI" id="CHEBI:57540"/>
        <dbReference type="ChEBI" id="CHEBI:57945"/>
        <dbReference type="ChEBI" id="CHEBI:132124"/>
    </reaction>
</comment>
<comment type="subunit">
    <text evidence="1">NDH-1 is composed of 14 different subunits. Subunits NuoA, H, J, K, L, M, N constitute the membrane sector of the complex.</text>
</comment>
<comment type="subcellular location">
    <subcellularLocation>
        <location evidence="1">Cell inner membrane</location>
        <topology evidence="1">Multi-pass membrane protein</topology>
    </subcellularLocation>
</comment>
<comment type="similarity">
    <text evidence="1">Belongs to the complex I subunit 1 family.</text>
</comment>
<comment type="sequence caution" evidence="2">
    <conflict type="erroneous initiation">
        <sequence resource="EMBL-CDS" id="ABC43799"/>
    </conflict>
</comment>
<evidence type="ECO:0000255" key="1">
    <source>
        <dbReference type="HAMAP-Rule" id="MF_01350"/>
    </source>
</evidence>
<evidence type="ECO:0000305" key="2"/>
<keyword id="KW-0997">Cell inner membrane</keyword>
<keyword id="KW-1003">Cell membrane</keyword>
<keyword id="KW-0472">Membrane</keyword>
<keyword id="KW-0520">NAD</keyword>
<keyword id="KW-0874">Quinone</keyword>
<keyword id="KW-1185">Reference proteome</keyword>
<keyword id="KW-1278">Translocase</keyword>
<keyword id="KW-0812">Transmembrane</keyword>
<keyword id="KW-1133">Transmembrane helix</keyword>
<keyword id="KW-0830">Ubiquinone</keyword>
<reference key="1">
    <citation type="journal article" date="2005" name="Proc. Natl. Acad. Sci. U.S.A.">
        <title>The genome of Salinibacter ruber: convergence and gene exchange among hyperhalophilic bacteria and archaea.</title>
        <authorList>
            <person name="Mongodin E.F."/>
            <person name="Nelson K.E."/>
            <person name="Daugherty S."/>
            <person name="DeBoy R.T."/>
            <person name="Wister J."/>
            <person name="Khouri H."/>
            <person name="Weidman J."/>
            <person name="Walsh D.A."/>
            <person name="Papke R.T."/>
            <person name="Sanchez Perez G."/>
            <person name="Sharma A.K."/>
            <person name="Nesbo C.L."/>
            <person name="MacLeod D."/>
            <person name="Bapteste E."/>
            <person name="Doolittle W.F."/>
            <person name="Charlebois R.L."/>
            <person name="Legault B."/>
            <person name="Rodriguez-Valera F."/>
        </authorList>
    </citation>
    <scope>NUCLEOTIDE SEQUENCE [LARGE SCALE GENOMIC DNA]</scope>
    <source>
        <strain>DSM 13855 / CECT 5946 / M31</strain>
    </source>
</reference>
<protein>
    <recommendedName>
        <fullName evidence="1">NADH-quinone oxidoreductase subunit H</fullName>
        <ecNumber evidence="1">7.1.1.-</ecNumber>
    </recommendedName>
    <alternativeName>
        <fullName evidence="1">NADH dehydrogenase I subunit H</fullName>
    </alternativeName>
    <alternativeName>
        <fullName evidence="1">NDH-1 subunit H</fullName>
    </alternativeName>
</protein>
<proteinExistence type="inferred from homology"/>
<feature type="chain" id="PRO_0000240109" description="NADH-quinone oxidoreductase subunit H">
    <location>
        <begin position="1"/>
        <end position="345"/>
    </location>
</feature>
<feature type="transmembrane region" description="Helical" evidence="1">
    <location>
        <begin position="9"/>
        <end position="29"/>
    </location>
</feature>
<feature type="transmembrane region" description="Helical" evidence="1">
    <location>
        <begin position="82"/>
        <end position="102"/>
    </location>
</feature>
<feature type="transmembrane region" description="Helical" evidence="1">
    <location>
        <begin position="108"/>
        <end position="128"/>
    </location>
</feature>
<feature type="transmembrane region" description="Helical" evidence="1">
    <location>
        <begin position="154"/>
        <end position="174"/>
    </location>
</feature>
<feature type="transmembrane region" description="Helical" evidence="1">
    <location>
        <begin position="183"/>
        <end position="203"/>
    </location>
</feature>
<feature type="transmembrane region" description="Helical" evidence="1">
    <location>
        <begin position="241"/>
        <end position="261"/>
    </location>
</feature>
<feature type="transmembrane region" description="Helical" evidence="1">
    <location>
        <begin position="282"/>
        <end position="302"/>
    </location>
</feature>
<feature type="transmembrane region" description="Helical" evidence="1">
    <location>
        <begin position="325"/>
        <end position="345"/>
    </location>
</feature>
<gene>
    <name evidence="1" type="primary">nuoH</name>
    <name type="ordered locus">SRU_2784</name>
</gene>